<keyword id="KW-0963">Cytoplasm</keyword>
<keyword id="KW-0378">Hydrolase</keyword>
<keyword id="KW-0540">Nuclease</keyword>
<keyword id="KW-1185">Reference proteome</keyword>
<keyword id="KW-0690">Ribosome biogenesis</keyword>
<organism>
    <name type="scientific">Bradyrhizobium diazoefficiens (strain JCM 10833 / BCRC 13528 / IAM 13628 / NBRC 14792 / USDA 110)</name>
    <dbReference type="NCBI Taxonomy" id="224911"/>
    <lineage>
        <taxon>Bacteria</taxon>
        <taxon>Pseudomonadati</taxon>
        <taxon>Pseudomonadota</taxon>
        <taxon>Alphaproteobacteria</taxon>
        <taxon>Hyphomicrobiales</taxon>
        <taxon>Nitrobacteraceae</taxon>
        <taxon>Bradyrhizobium</taxon>
    </lineage>
</organism>
<reference key="1">
    <citation type="journal article" date="2002" name="DNA Res.">
        <title>Complete genomic sequence of nitrogen-fixing symbiotic bacterium Bradyrhizobium japonicum USDA110.</title>
        <authorList>
            <person name="Kaneko T."/>
            <person name="Nakamura Y."/>
            <person name="Sato S."/>
            <person name="Minamisawa K."/>
            <person name="Uchiumi T."/>
            <person name="Sasamoto S."/>
            <person name="Watanabe A."/>
            <person name="Idesawa K."/>
            <person name="Iriguchi M."/>
            <person name="Kawashima K."/>
            <person name="Kohara M."/>
            <person name="Matsumoto M."/>
            <person name="Shimpo S."/>
            <person name="Tsuruoka H."/>
            <person name="Wada T."/>
            <person name="Yamada M."/>
            <person name="Tabata S."/>
        </authorList>
    </citation>
    <scope>NUCLEOTIDE SEQUENCE [LARGE SCALE GENOMIC DNA]</scope>
    <source>
        <strain>JCM 10833 / BCRC 13528 / IAM 13628 / NBRC 14792 / USDA 110</strain>
    </source>
</reference>
<protein>
    <recommendedName>
        <fullName evidence="1">Putative pre-16S rRNA nuclease</fullName>
        <ecNumber evidence="1">3.1.-.-</ecNumber>
    </recommendedName>
</protein>
<gene>
    <name type="ordered locus">blr5094</name>
</gene>
<proteinExistence type="inferred from homology"/>
<accession>Q89K24</accession>
<sequence length="161" mass="17241">MPALILPLVDAATHWPERGGLVGLDLGTKTIGVAVSNPDRRLATGVETIQRKAFKQDAARLLAIAAERKVVGFVLGLPINMDGSEGPRAQSTRAFARNLANLTTLPIGLWDERLSTAAVERELIGMDVSRAKRAEVIDEHAAIFILQGALDRLANLRTGNG</sequence>
<name>YQGF_BRADU</name>
<comment type="function">
    <text evidence="1">Could be a nuclease involved in processing of the 5'-end of pre-16S rRNA.</text>
</comment>
<comment type="subcellular location">
    <subcellularLocation>
        <location evidence="1">Cytoplasm</location>
    </subcellularLocation>
</comment>
<comment type="similarity">
    <text evidence="1">Belongs to the YqgF nuclease family.</text>
</comment>
<comment type="sequence caution" evidence="2">
    <conflict type="erroneous initiation">
        <sequence resource="EMBL-CDS" id="BAC50359"/>
    </conflict>
    <text>Extended N-terminus.</text>
</comment>
<evidence type="ECO:0000255" key="1">
    <source>
        <dbReference type="HAMAP-Rule" id="MF_00651"/>
    </source>
</evidence>
<evidence type="ECO:0000305" key="2"/>
<dbReference type="EC" id="3.1.-.-" evidence="1"/>
<dbReference type="EMBL" id="BA000040">
    <property type="protein sequence ID" value="BAC50359.1"/>
    <property type="status" value="ALT_INIT"/>
    <property type="molecule type" value="Genomic_DNA"/>
</dbReference>
<dbReference type="RefSeq" id="NP_771734.1">
    <property type="nucleotide sequence ID" value="NC_004463.1"/>
</dbReference>
<dbReference type="RefSeq" id="WP_028171591.1">
    <property type="nucleotide sequence ID" value="NC_004463.1"/>
</dbReference>
<dbReference type="SMR" id="Q89K24"/>
<dbReference type="FunCoup" id="Q89K24">
    <property type="interactions" value="395"/>
</dbReference>
<dbReference type="STRING" id="224911.AAV28_22840"/>
<dbReference type="EnsemblBacteria" id="BAC50359">
    <property type="protein sequence ID" value="BAC50359"/>
    <property type="gene ID" value="BAC50359"/>
</dbReference>
<dbReference type="GeneID" id="46492100"/>
<dbReference type="KEGG" id="bja:blr5094"/>
<dbReference type="PATRIC" id="fig|224911.44.peg.4963"/>
<dbReference type="eggNOG" id="COG0816">
    <property type="taxonomic scope" value="Bacteria"/>
</dbReference>
<dbReference type="HOGENOM" id="CLU_098240_1_1_5"/>
<dbReference type="InParanoid" id="Q89K24"/>
<dbReference type="OrthoDB" id="9796140at2"/>
<dbReference type="Proteomes" id="UP000002526">
    <property type="component" value="Chromosome"/>
</dbReference>
<dbReference type="GO" id="GO:0005737">
    <property type="term" value="C:cytoplasm"/>
    <property type="evidence" value="ECO:0007669"/>
    <property type="project" value="UniProtKB-SubCell"/>
</dbReference>
<dbReference type="GO" id="GO:0004518">
    <property type="term" value="F:nuclease activity"/>
    <property type="evidence" value="ECO:0007669"/>
    <property type="project" value="UniProtKB-KW"/>
</dbReference>
<dbReference type="GO" id="GO:0000967">
    <property type="term" value="P:rRNA 5'-end processing"/>
    <property type="evidence" value="ECO:0000318"/>
    <property type="project" value="GO_Central"/>
</dbReference>
<dbReference type="CDD" id="cd16964">
    <property type="entry name" value="YqgF"/>
    <property type="match status" value="1"/>
</dbReference>
<dbReference type="Gene3D" id="3.30.420.140">
    <property type="entry name" value="YqgF/RNase H-like domain"/>
    <property type="match status" value="1"/>
</dbReference>
<dbReference type="HAMAP" id="MF_00651">
    <property type="entry name" value="Nuclease_YqgF"/>
    <property type="match status" value="1"/>
</dbReference>
<dbReference type="InterPro" id="IPR012337">
    <property type="entry name" value="RNaseH-like_sf"/>
</dbReference>
<dbReference type="InterPro" id="IPR005227">
    <property type="entry name" value="YqgF"/>
</dbReference>
<dbReference type="InterPro" id="IPR006641">
    <property type="entry name" value="YqgF/RNaseH-like_dom"/>
</dbReference>
<dbReference type="InterPro" id="IPR037027">
    <property type="entry name" value="YqgF/RNaseH-like_dom_sf"/>
</dbReference>
<dbReference type="NCBIfam" id="TIGR00250">
    <property type="entry name" value="RNAse_H_YqgF"/>
    <property type="match status" value="1"/>
</dbReference>
<dbReference type="PANTHER" id="PTHR33317">
    <property type="entry name" value="POLYNUCLEOTIDYL TRANSFERASE, RIBONUCLEASE H-LIKE SUPERFAMILY PROTEIN"/>
    <property type="match status" value="1"/>
</dbReference>
<dbReference type="PANTHER" id="PTHR33317:SF4">
    <property type="entry name" value="POLYNUCLEOTIDYL TRANSFERASE, RIBONUCLEASE H-LIKE SUPERFAMILY PROTEIN"/>
    <property type="match status" value="1"/>
</dbReference>
<dbReference type="Pfam" id="PF03652">
    <property type="entry name" value="RuvX"/>
    <property type="match status" value="1"/>
</dbReference>
<dbReference type="SMART" id="SM00732">
    <property type="entry name" value="YqgFc"/>
    <property type="match status" value="1"/>
</dbReference>
<dbReference type="SUPFAM" id="SSF53098">
    <property type="entry name" value="Ribonuclease H-like"/>
    <property type="match status" value="1"/>
</dbReference>
<feature type="chain" id="PRO_0000172031" description="Putative pre-16S rRNA nuclease">
    <location>
        <begin position="1"/>
        <end position="161"/>
    </location>
</feature>